<sequence>MLIRRRALWLTIPILIIMTSHKIMCAFDLSHVHSESCLKIQDISSDTINFTPNLVMFRFFSNETHSDVFHLPKCIFDSKLTSYLFDHLNIYEDVSVYKNNFEKYYMGSVEGTYRTIIIKGEDTTPYLDKTTAPTVEITEKDLIITYQGIRYMNPFPVLSLIDDESCEVFDDINELILPYFGKCRKFYLNFGSVTLFGHITSNFVTIKYTAQNGTDPYTIRLFFGNSAEIVHTLPFEAQDLALRMMMYDDFEIIGEVGPVKEMLKSFKLSLLDSLLEQNHEDVMNDFRHVFEAFYNHIKKIRDGSIDIKSLHIEQLLDSLLAYSIGYYIQYRYPPYTGKWRGIEHFIETETYIHMVPELFDLFAHNMTVKTPTRPNAIKFINILIRLYSYTDYTKLDHRGLSLYFLKYIYQGNVTDDIATYAHRYMTNLYTKYTYPKTQEGEHLYKSYNDSLDTFILNTIGLKSKNKTLLHHILLLQTGMCNIQNMIGHFHSLQNNDPKFGALLSPCYRSLRYDLTAKKIGQLITKESLEPYGRLVNMVRFMTKNSSMLNVLKCELPEDDGLLAIATVDNKTYIISSRPIAVGVVYKATYTAINLFLYVTRIQNNTCIHIDKVYRDGDVKAVYTFSLDTAKDCGDMCPSVLVEYQTNTGFIGIHVINSIADIQYISENRKLFPESSHYLWLLKNDTVLELEGTNFFLFSSKSPGAIVLYIIIISLIVWTLYEIIKLFCYKRQWQYQKL</sequence>
<feature type="signal peptide" evidence="1">
    <location>
        <begin position="1"/>
        <end position="25"/>
    </location>
</feature>
<feature type="chain" id="PRO_0000436652" description="Envelope glycoprotein H" evidence="1">
    <location>
        <begin position="26"/>
        <end position="737"/>
    </location>
</feature>
<feature type="topological domain" description="Virion surface" evidence="1">
    <location>
        <begin position="26"/>
        <end position="702"/>
    </location>
</feature>
<feature type="transmembrane region" description="Helical" evidence="1">
    <location>
        <begin position="703"/>
        <end position="723"/>
    </location>
</feature>
<feature type="topological domain" description="Intravirion" evidence="1">
    <location>
        <begin position="724"/>
        <end position="737"/>
    </location>
</feature>
<feature type="region of interest" description="Interaction with gL" evidence="1">
    <location>
        <begin position="191"/>
        <end position="253"/>
    </location>
</feature>
<feature type="glycosylation site" description="N-linked (GlcNAc...) asparagine; by host" evidence="1">
    <location>
        <position position="62"/>
    </location>
</feature>
<feature type="glycosylation site" description="N-linked (GlcNAc...) asparagine; by host" evidence="1">
    <location>
        <position position="212"/>
    </location>
</feature>
<feature type="glycosylation site" description="N-linked (GlcNAc...) asparagine; by host" evidence="1">
    <location>
        <position position="365"/>
    </location>
</feature>
<feature type="glycosylation site" description="N-linked (GlcNAc...) asparagine; by host" evidence="1">
    <location>
        <position position="412"/>
    </location>
</feature>
<feature type="glycosylation site" description="N-linked (GlcNAc...) asparagine; by host" evidence="1">
    <location>
        <position position="448"/>
    </location>
</feature>
<feature type="glycosylation site" description="N-linked (GlcNAc...) asparagine; by host" evidence="1">
    <location>
        <position position="465"/>
    </location>
</feature>
<feature type="glycosylation site" description="N-linked (GlcNAc...) asparagine; by host" evidence="1">
    <location>
        <position position="544"/>
    </location>
</feature>
<feature type="glycosylation site" description="N-linked (GlcNAc...) asparagine; by host" evidence="1">
    <location>
        <position position="569"/>
    </location>
</feature>
<feature type="glycosylation site" description="N-linked (GlcNAc...) asparagine; by host" evidence="1">
    <location>
        <position position="603"/>
    </location>
</feature>
<feature type="glycosylation site" description="N-linked (GlcNAc...) asparagine; by host" evidence="1">
    <location>
        <position position="683"/>
    </location>
</feature>
<protein>
    <recommendedName>
        <fullName evidence="1">Envelope glycoprotein H</fullName>
        <shortName evidence="1">gH</shortName>
    </recommendedName>
</protein>
<reference key="1">
    <citation type="journal article" date="2007" name="J. Virol.">
        <title>Identification of novel rodent herpesviruses, including the first gammaherpesvirus of Mus musculus.</title>
        <authorList>
            <person name="Ehlers B."/>
            <person name="Kuchler J."/>
            <person name="Yasmum N."/>
            <person name="Dural G."/>
            <person name="Voigt S."/>
            <person name="Schmidt-Chanasit J."/>
            <person name="Jakel T."/>
            <person name="Matuschka F.R."/>
            <person name="Richter D."/>
            <person name="Essbauer S."/>
            <person name="Hughes D.J."/>
            <person name="Summers C."/>
            <person name="Bennett M."/>
            <person name="Stewart J.P."/>
            <person name="Ulrich R.G."/>
        </authorList>
    </citation>
    <scope>NUCLEOTIDE SEQUENCE [GENOMIC DNA]</scope>
</reference>
<reference key="2">
    <citation type="journal article" date="2001" name="J. Gen. Virol.">
        <title>Genetic and ultrastructural characterization of a European isolate of the fatal endotheliotropic elephant herpesvirus.</title>
        <authorList>
            <person name="Ehlers B."/>
            <person name="Burkhardt S."/>
            <person name="Goltz M."/>
            <person name="Bergmann V."/>
            <person name="Ochs A."/>
            <person name="Weiler H."/>
            <person name="Hentschke J."/>
        </authorList>
    </citation>
    <scope>NUCLEOTIDE SEQUENCE [GENOMIC DNA]</scope>
</reference>
<name>GH_ELHVK</name>
<evidence type="ECO:0000255" key="1">
    <source>
        <dbReference type="HAMAP-Rule" id="MF_04033"/>
    </source>
</evidence>
<dbReference type="EMBL" id="AF322977">
    <property type="protein sequence ID" value="ABG36570.1"/>
    <property type="molecule type" value="Genomic_DNA"/>
</dbReference>
<dbReference type="SMR" id="Q18LE9"/>
<dbReference type="GlyCosmos" id="Q18LE9">
    <property type="glycosylation" value="10 sites, No reported glycans"/>
</dbReference>
<dbReference type="GO" id="GO:0044175">
    <property type="term" value="C:host cell endosome membrane"/>
    <property type="evidence" value="ECO:0007669"/>
    <property type="project" value="UniProtKB-SubCell"/>
</dbReference>
<dbReference type="GO" id="GO:0020002">
    <property type="term" value="C:host cell plasma membrane"/>
    <property type="evidence" value="ECO:0007669"/>
    <property type="project" value="UniProtKB-SubCell"/>
</dbReference>
<dbReference type="GO" id="GO:0016020">
    <property type="term" value="C:membrane"/>
    <property type="evidence" value="ECO:0007669"/>
    <property type="project" value="UniProtKB-KW"/>
</dbReference>
<dbReference type="GO" id="GO:0019031">
    <property type="term" value="C:viral envelope"/>
    <property type="evidence" value="ECO:0007669"/>
    <property type="project" value="UniProtKB-KW"/>
</dbReference>
<dbReference type="GO" id="GO:0055036">
    <property type="term" value="C:virion membrane"/>
    <property type="evidence" value="ECO:0007669"/>
    <property type="project" value="UniProtKB-SubCell"/>
</dbReference>
<dbReference type="GO" id="GO:0019064">
    <property type="term" value="P:fusion of virus membrane with host plasma membrane"/>
    <property type="evidence" value="ECO:0007669"/>
    <property type="project" value="UniProtKB-KW"/>
</dbReference>
<dbReference type="GO" id="GO:0046718">
    <property type="term" value="P:symbiont entry into host cell"/>
    <property type="evidence" value="ECO:0007669"/>
    <property type="project" value="UniProtKB-KW"/>
</dbReference>
<dbReference type="Gene3D" id="2.60.40.3190">
    <property type="entry name" value="Herpesvirus glycoprotein H, C-terminal domain"/>
    <property type="match status" value="1"/>
</dbReference>
<dbReference type="HAMAP" id="MF_04033">
    <property type="entry name" value="HSV_GH"/>
    <property type="match status" value="1"/>
</dbReference>
<dbReference type="InterPro" id="IPR003493">
    <property type="entry name" value="Herpes_gH"/>
</dbReference>
<dbReference type="InterPro" id="IPR035305">
    <property type="entry name" value="Herpes_glycoH_C"/>
</dbReference>
<dbReference type="InterPro" id="IPR038172">
    <property type="entry name" value="Herpes_glycoH_C_sf"/>
</dbReference>
<dbReference type="Pfam" id="PF17488">
    <property type="entry name" value="Herpes_glycoH_C"/>
    <property type="match status" value="1"/>
</dbReference>
<dbReference type="Pfam" id="PF02489">
    <property type="entry name" value="Herpes_glycop_H"/>
    <property type="match status" value="1"/>
</dbReference>
<accession>Q18LE9</accession>
<proteinExistence type="inferred from homology"/>
<organism>
    <name type="scientific">Elephantid herpesvirus 1 (isolate Asian elephant/Berlin/Kiba/1998)</name>
    <name type="common">EIHV-1</name>
    <name type="synonym">Elephant endotheliotropic herpesvirus</name>
    <dbReference type="NCBI Taxonomy" id="654902"/>
    <lineage>
        <taxon>Viruses</taxon>
        <taxon>Duplodnaviria</taxon>
        <taxon>Heunggongvirae</taxon>
        <taxon>Peploviricota</taxon>
        <taxon>Herviviricetes</taxon>
        <taxon>Herpesvirales</taxon>
        <taxon>Orthoherpesviridae</taxon>
        <taxon>Betaherpesvirinae</taxon>
        <taxon>Proboscivirus</taxon>
        <taxon>Proboscivirus elephantidbeta1</taxon>
        <taxon>Elephantid herpesvirus 1</taxon>
    </lineage>
</organism>
<gene>
    <name evidence="1" type="primary">gH</name>
</gene>
<comment type="function">
    <text evidence="1">The heterodimer glycoprotein H-glycoprotein L is required for the fusion of viral and plasma membranes leading to virus entry into the host cell. Following initial binding to host receptor, membrane fusion is mediated by the fusion machinery composed of gB and the heterodimer gH/gL. May also be involved in the fusion between the virion envelope and the outer nuclear membrane during virion morphogenesis.</text>
</comment>
<comment type="subunit">
    <text evidence="1">Interacts with glycoprotein L (gL); this interaction is necessary for the correct processing and cell surface expression of gH. The heterodimer gH/gL seems to interact with gB trimers during fusion.</text>
</comment>
<comment type="subcellular location">
    <subcellularLocation>
        <location evidence="1">Virion membrane</location>
        <topology evidence="1">Single-pass type I membrane protein</topology>
    </subcellularLocation>
    <subcellularLocation>
        <location evidence="1">Host cell membrane</location>
        <topology evidence="1">Single-pass type I membrane protein</topology>
    </subcellularLocation>
    <subcellularLocation>
        <location evidence="1">Host endosome membrane</location>
        <topology evidence="1">Single-pass type I membrane protein</topology>
    </subcellularLocation>
    <text evidence="1">During virion morphogenesis, this protein probably accumulates in the endosomes and trans-Golgi where secondary envelopment occurs. It is probably transported to the cell surface from where it is endocytosed and directed to the trans-Golgi network (TGN).</text>
</comment>
<comment type="PTM">
    <text evidence="1">N-glycosylated, O-glycosylated, and sialylated.</text>
</comment>
<comment type="similarity">
    <text evidence="1">Belongs to the herpesviridae glycoprotein H family.</text>
</comment>
<keyword id="KW-1169">Fusion of virus membrane with host cell membrane</keyword>
<keyword id="KW-1168">Fusion of virus membrane with host membrane</keyword>
<keyword id="KW-0325">Glycoprotein</keyword>
<keyword id="KW-1032">Host cell membrane</keyword>
<keyword id="KW-1039">Host endosome</keyword>
<keyword id="KW-1043">Host membrane</keyword>
<keyword id="KW-0472">Membrane</keyword>
<keyword id="KW-0730">Sialic acid</keyword>
<keyword id="KW-0732">Signal</keyword>
<keyword id="KW-0812">Transmembrane</keyword>
<keyword id="KW-1133">Transmembrane helix</keyword>
<keyword id="KW-0261">Viral envelope protein</keyword>
<keyword id="KW-1162">Viral penetration into host cytoplasm</keyword>
<keyword id="KW-0946">Virion</keyword>
<keyword id="KW-1160">Virus entry into host cell</keyword>
<organismHost>
    <name type="scientific">Elephas maximus</name>
    <name type="common">Indian elephant</name>
    <dbReference type="NCBI Taxonomy" id="9783"/>
</organismHost>
<organismHost>
    <name type="scientific">Loxodonta africana</name>
    <name type="common">African elephant</name>
    <dbReference type="NCBI Taxonomy" id="9785"/>
</organismHost>
<organismHost>
    <name type="scientific">Loxodonta cyclotis</name>
    <name type="common">African forest elephant</name>
    <dbReference type="NCBI Taxonomy" id="99490"/>
</organismHost>